<accession>A9A3T2</accession>
<reference key="1">
    <citation type="journal article" date="2010" name="Proc. Natl. Acad. Sci. U.S.A.">
        <title>Nitrosopumilus maritimus genome reveals unique mechanisms for nitrification and autotrophy in globally distributed marine crenarchaea.</title>
        <authorList>
            <person name="Walker C.B."/>
            <person name="de la Torre J.R."/>
            <person name="Klotz M.G."/>
            <person name="Urakawa H."/>
            <person name="Pinel N."/>
            <person name="Arp D.J."/>
            <person name="Brochier-Armanet C."/>
            <person name="Chain P.S."/>
            <person name="Chan P.P."/>
            <person name="Gollabgir A."/>
            <person name="Hemp J."/>
            <person name="Hugler M."/>
            <person name="Karr E.A."/>
            <person name="Konneke M."/>
            <person name="Shin M."/>
            <person name="Lawton T.J."/>
            <person name="Lowe T."/>
            <person name="Martens-Habbena W."/>
            <person name="Sayavedra-Soto L.A."/>
            <person name="Lang D."/>
            <person name="Sievert S.M."/>
            <person name="Rosenzweig A.C."/>
            <person name="Manning G."/>
            <person name="Stahl D.A."/>
        </authorList>
    </citation>
    <scope>NUCLEOTIDE SEQUENCE [LARGE SCALE GENOMIC DNA]</scope>
    <source>
        <strain>SCM1</strain>
    </source>
</reference>
<name>THIL_NITMS</name>
<evidence type="ECO:0000255" key="1">
    <source>
        <dbReference type="HAMAP-Rule" id="MF_02128"/>
    </source>
</evidence>
<sequence>MSKLDESEIIKIFQRKLGNKNSEDVEIFKLKQNIIAKTDTLVQSTDIPPKMKLGEAARKSVVACVSDFAAKGVKPQYGIISINFPSNISRSKVEEAATGFRKACSEFGISILGGDTNAGKEIVFNVCLFGSAEKIVPRNGSESKDLIFATGPFGYTGAGLSILLYKKKGKREFVAKAIKAVTHPKPRVDFGVKNKRYFTSSMDSSDGLSTTLNEMAKQSKKKFVINNSPHKKDLGEFAKSNQDNLVFHGGEEYEFVFTINPKHKKTILKNAKSLRTPIIEIGYVTTGKGVILQRDNKDIPLKDKGWKHFR</sequence>
<organism>
    <name type="scientific">Nitrosopumilus maritimus (strain SCM1)</name>
    <dbReference type="NCBI Taxonomy" id="436308"/>
    <lineage>
        <taxon>Archaea</taxon>
        <taxon>Nitrososphaerota</taxon>
        <taxon>Nitrososphaeria</taxon>
        <taxon>Nitrosopumilales</taxon>
        <taxon>Nitrosopumilaceae</taxon>
        <taxon>Nitrosopumilus</taxon>
    </lineage>
</organism>
<proteinExistence type="inferred from homology"/>
<gene>
    <name evidence="1" type="primary">thiL</name>
    <name type="ordered locus">Nmar_1448</name>
</gene>
<keyword id="KW-0067">ATP-binding</keyword>
<keyword id="KW-0418">Kinase</keyword>
<keyword id="KW-0460">Magnesium</keyword>
<keyword id="KW-0479">Metal-binding</keyword>
<keyword id="KW-0547">Nucleotide-binding</keyword>
<keyword id="KW-1185">Reference proteome</keyword>
<keyword id="KW-0784">Thiamine biosynthesis</keyword>
<keyword id="KW-0808">Transferase</keyword>
<dbReference type="EC" id="2.7.4.16" evidence="1"/>
<dbReference type="EMBL" id="CP000866">
    <property type="protein sequence ID" value="ABX13344.1"/>
    <property type="molecule type" value="Genomic_DNA"/>
</dbReference>
<dbReference type="RefSeq" id="WP_012215831.1">
    <property type="nucleotide sequence ID" value="NC_010085.1"/>
</dbReference>
<dbReference type="SMR" id="A9A3T2"/>
<dbReference type="FunCoup" id="A9A3T2">
    <property type="interactions" value="58"/>
</dbReference>
<dbReference type="STRING" id="436308.Nmar_1448"/>
<dbReference type="EnsemblBacteria" id="ABX13344">
    <property type="protein sequence ID" value="ABX13344"/>
    <property type="gene ID" value="Nmar_1448"/>
</dbReference>
<dbReference type="GeneID" id="5773293"/>
<dbReference type="KEGG" id="nmr:Nmar_1448"/>
<dbReference type="eggNOG" id="arCOG00638">
    <property type="taxonomic scope" value="Archaea"/>
</dbReference>
<dbReference type="HOGENOM" id="CLU_046964_2_1_2"/>
<dbReference type="InParanoid" id="A9A3T2"/>
<dbReference type="OrthoDB" id="45909at2157"/>
<dbReference type="PhylomeDB" id="A9A3T2"/>
<dbReference type="UniPathway" id="UPA00060">
    <property type="reaction ID" value="UER00142"/>
</dbReference>
<dbReference type="Proteomes" id="UP000000792">
    <property type="component" value="Chromosome"/>
</dbReference>
<dbReference type="GO" id="GO:0005524">
    <property type="term" value="F:ATP binding"/>
    <property type="evidence" value="ECO:0007669"/>
    <property type="project" value="UniProtKB-UniRule"/>
</dbReference>
<dbReference type="GO" id="GO:0000287">
    <property type="term" value="F:magnesium ion binding"/>
    <property type="evidence" value="ECO:0007669"/>
    <property type="project" value="UniProtKB-UniRule"/>
</dbReference>
<dbReference type="GO" id="GO:0009030">
    <property type="term" value="F:thiamine-phosphate kinase activity"/>
    <property type="evidence" value="ECO:0007669"/>
    <property type="project" value="UniProtKB-UniRule"/>
</dbReference>
<dbReference type="GO" id="GO:0009228">
    <property type="term" value="P:thiamine biosynthetic process"/>
    <property type="evidence" value="ECO:0007669"/>
    <property type="project" value="UniProtKB-KW"/>
</dbReference>
<dbReference type="GO" id="GO:0009229">
    <property type="term" value="P:thiamine diphosphate biosynthetic process"/>
    <property type="evidence" value="ECO:0007669"/>
    <property type="project" value="UniProtKB-UniRule"/>
</dbReference>
<dbReference type="CDD" id="cd02194">
    <property type="entry name" value="ThiL"/>
    <property type="match status" value="1"/>
</dbReference>
<dbReference type="Gene3D" id="3.90.650.10">
    <property type="entry name" value="PurM-like C-terminal domain"/>
    <property type="match status" value="1"/>
</dbReference>
<dbReference type="Gene3D" id="3.30.1330.10">
    <property type="entry name" value="PurM-like, N-terminal domain"/>
    <property type="match status" value="1"/>
</dbReference>
<dbReference type="HAMAP" id="MF_02128">
    <property type="entry name" value="TMP_kinase"/>
    <property type="match status" value="1"/>
</dbReference>
<dbReference type="InterPro" id="IPR010918">
    <property type="entry name" value="PurM-like_C_dom"/>
</dbReference>
<dbReference type="InterPro" id="IPR036676">
    <property type="entry name" value="PurM-like_C_sf"/>
</dbReference>
<dbReference type="InterPro" id="IPR016188">
    <property type="entry name" value="PurM-like_N"/>
</dbReference>
<dbReference type="InterPro" id="IPR036921">
    <property type="entry name" value="PurM-like_N_sf"/>
</dbReference>
<dbReference type="InterPro" id="IPR006283">
    <property type="entry name" value="ThiL-like"/>
</dbReference>
<dbReference type="NCBIfam" id="TIGR01379">
    <property type="entry name" value="thiL"/>
    <property type="match status" value="1"/>
</dbReference>
<dbReference type="PANTHER" id="PTHR30270">
    <property type="entry name" value="THIAMINE-MONOPHOSPHATE KINASE"/>
    <property type="match status" value="1"/>
</dbReference>
<dbReference type="PANTHER" id="PTHR30270:SF0">
    <property type="entry name" value="THIAMINE-MONOPHOSPHATE KINASE"/>
    <property type="match status" value="1"/>
</dbReference>
<dbReference type="Pfam" id="PF00586">
    <property type="entry name" value="AIRS"/>
    <property type="match status" value="1"/>
</dbReference>
<dbReference type="Pfam" id="PF02769">
    <property type="entry name" value="AIRS_C"/>
    <property type="match status" value="1"/>
</dbReference>
<dbReference type="PIRSF" id="PIRSF005303">
    <property type="entry name" value="Thiam_monoph_kin"/>
    <property type="match status" value="1"/>
</dbReference>
<dbReference type="SUPFAM" id="SSF56042">
    <property type="entry name" value="PurM C-terminal domain-like"/>
    <property type="match status" value="1"/>
</dbReference>
<dbReference type="SUPFAM" id="SSF55326">
    <property type="entry name" value="PurM N-terminal domain-like"/>
    <property type="match status" value="1"/>
</dbReference>
<protein>
    <recommendedName>
        <fullName evidence="1">Thiamine-monophosphate kinase</fullName>
        <shortName evidence="1">TMP kinase</shortName>
        <shortName evidence="1">Thiamine-phosphate kinase</shortName>
        <ecNumber evidence="1">2.7.4.16</ecNumber>
    </recommendedName>
</protein>
<comment type="function">
    <text evidence="1">Catalyzes the ATP-dependent phosphorylation of thiamine-monophosphate (TMP) to form thiamine-pyrophosphate (TPP), the active form of vitamin B1.</text>
</comment>
<comment type="catalytic activity">
    <reaction evidence="1">
        <text>thiamine phosphate + ATP = thiamine diphosphate + ADP</text>
        <dbReference type="Rhea" id="RHEA:15913"/>
        <dbReference type="ChEBI" id="CHEBI:30616"/>
        <dbReference type="ChEBI" id="CHEBI:37575"/>
        <dbReference type="ChEBI" id="CHEBI:58937"/>
        <dbReference type="ChEBI" id="CHEBI:456216"/>
        <dbReference type="EC" id="2.7.4.16"/>
    </reaction>
</comment>
<comment type="pathway">
    <text evidence="1">Cofactor biosynthesis; thiamine diphosphate biosynthesis; thiamine diphosphate from thiamine phosphate: step 1/1.</text>
</comment>
<comment type="miscellaneous">
    <text evidence="1">Reaction mechanism of ThiL seems to utilize a direct, inline transfer of the gamma-phosphate of ATP to TMP rather than a phosphorylated enzyme intermediate.</text>
</comment>
<comment type="similarity">
    <text evidence="1">Belongs to the thiamine-monophosphate kinase family.</text>
</comment>
<feature type="chain" id="PRO_0000415642" description="Thiamine-monophosphate kinase">
    <location>
        <begin position="1"/>
        <end position="310"/>
    </location>
</feature>
<feature type="binding site" evidence="1">
    <location>
        <position position="24"/>
    </location>
    <ligand>
        <name>Mg(2+)</name>
        <dbReference type="ChEBI" id="CHEBI:18420"/>
        <label>3</label>
    </ligand>
</feature>
<feature type="binding site" evidence="1">
    <location>
        <position position="24"/>
    </location>
    <ligand>
        <name>Mg(2+)</name>
        <dbReference type="ChEBI" id="CHEBI:18420"/>
        <label>4</label>
    </ligand>
</feature>
<feature type="binding site" evidence="1">
    <location>
        <position position="38"/>
    </location>
    <ligand>
        <name>Mg(2+)</name>
        <dbReference type="ChEBI" id="CHEBI:18420"/>
        <label>1</label>
    </ligand>
</feature>
<feature type="binding site" evidence="1">
    <location>
        <position position="39"/>
    </location>
    <ligand>
        <name>Mg(2+)</name>
        <dbReference type="ChEBI" id="CHEBI:18420"/>
        <label>1</label>
    </ligand>
</feature>
<feature type="binding site" evidence="1">
    <location>
        <position position="39"/>
    </location>
    <ligand>
        <name>Mg(2+)</name>
        <dbReference type="ChEBI" id="CHEBI:18420"/>
        <label>2</label>
    </ligand>
</feature>
<feature type="binding site" evidence="1">
    <location>
        <position position="46"/>
    </location>
    <ligand>
        <name>substrate</name>
    </ligand>
</feature>
<feature type="binding site" evidence="1">
    <location>
        <position position="67"/>
    </location>
    <ligand>
        <name>Mg(2+)</name>
        <dbReference type="ChEBI" id="CHEBI:18420"/>
        <label>2</label>
    </ligand>
</feature>
<feature type="binding site" evidence="1">
    <location>
        <position position="67"/>
    </location>
    <ligand>
        <name>Mg(2+)</name>
        <dbReference type="ChEBI" id="CHEBI:18420"/>
        <label>3</label>
    </ligand>
</feature>
<feature type="binding site" evidence="1">
    <location>
        <position position="67"/>
    </location>
    <ligand>
        <name>Mg(2+)</name>
        <dbReference type="ChEBI" id="CHEBI:18420"/>
        <label>4</label>
    </ligand>
</feature>
<feature type="binding site" evidence="1">
    <location>
        <begin position="114"/>
        <end position="115"/>
    </location>
    <ligand>
        <name>ATP</name>
        <dbReference type="ChEBI" id="CHEBI:30616"/>
    </ligand>
</feature>
<feature type="binding site" evidence="1">
    <location>
        <position position="115"/>
    </location>
    <ligand>
        <name>Mg(2+)</name>
        <dbReference type="ChEBI" id="CHEBI:18420"/>
        <label>1</label>
    </ligand>
</feature>
<feature type="binding site" evidence="1">
    <location>
        <position position="138"/>
    </location>
    <ligand>
        <name>ATP</name>
        <dbReference type="ChEBI" id="CHEBI:30616"/>
    </ligand>
</feature>
<feature type="binding site" evidence="1">
    <location>
        <position position="203"/>
    </location>
    <ligand>
        <name>Mg(2+)</name>
        <dbReference type="ChEBI" id="CHEBI:18420"/>
        <label>3</label>
    </ligand>
</feature>
<feature type="binding site" evidence="1">
    <location>
        <position position="205"/>
    </location>
    <ligand>
        <name>ATP</name>
        <dbReference type="ChEBI" id="CHEBI:30616"/>
    </ligand>
</feature>
<feature type="binding site" evidence="1">
    <location>
        <position position="206"/>
    </location>
    <ligand>
        <name>Mg(2+)</name>
        <dbReference type="ChEBI" id="CHEBI:18420"/>
        <label>5</label>
    </ligand>
</feature>
<feature type="binding site" evidence="1">
    <location>
        <position position="251"/>
    </location>
    <ligand>
        <name>substrate</name>
    </ligand>
</feature>
<feature type="binding site" evidence="1">
    <location>
        <position position="306"/>
    </location>
    <ligand>
        <name>substrate</name>
    </ligand>
</feature>